<accession>Q4IEK8</accession>
<accession>A0A0E0S765</accession>
<accession>I1RKE8</accession>
<accession>V6R2P5</accession>
<proteinExistence type="inferred from homology"/>
<evidence type="ECO:0000250" key="1"/>
<evidence type="ECO:0000255" key="2">
    <source>
        <dbReference type="PROSITE-ProRule" id="PRU00541"/>
    </source>
</evidence>
<evidence type="ECO:0000255" key="3">
    <source>
        <dbReference type="PROSITE-ProRule" id="PRU00542"/>
    </source>
</evidence>
<evidence type="ECO:0000256" key="4">
    <source>
        <dbReference type="SAM" id="MobiDB-lite"/>
    </source>
</evidence>
<evidence type="ECO:0000305" key="5"/>
<organism>
    <name type="scientific">Gibberella zeae (strain ATCC MYA-4620 / CBS 123657 / FGSC 9075 / NRRL 31084 / PH-1)</name>
    <name type="common">Wheat head blight fungus</name>
    <name type="synonym">Fusarium graminearum</name>
    <dbReference type="NCBI Taxonomy" id="229533"/>
    <lineage>
        <taxon>Eukaryota</taxon>
        <taxon>Fungi</taxon>
        <taxon>Dikarya</taxon>
        <taxon>Ascomycota</taxon>
        <taxon>Pezizomycotina</taxon>
        <taxon>Sordariomycetes</taxon>
        <taxon>Hypocreomycetidae</taxon>
        <taxon>Hypocreales</taxon>
        <taxon>Nectriaceae</taxon>
        <taxon>Fusarium</taxon>
    </lineage>
</organism>
<protein>
    <recommendedName>
        <fullName>ATP-dependent RNA helicase HAS1</fullName>
        <ecNumber>3.6.4.13</ecNumber>
    </recommendedName>
</protein>
<dbReference type="EC" id="3.6.4.13"/>
<dbReference type="EMBL" id="DS231664">
    <property type="protein sequence ID" value="ESU08761.1"/>
    <property type="molecule type" value="Genomic_DNA"/>
</dbReference>
<dbReference type="EMBL" id="HG970333">
    <property type="protein sequence ID" value="CEF79340.1"/>
    <property type="molecule type" value="Genomic_DNA"/>
</dbReference>
<dbReference type="RefSeq" id="XP_011321260.1">
    <property type="nucleotide sequence ID" value="XM_011322958.1"/>
</dbReference>
<dbReference type="SMR" id="Q4IEK8"/>
<dbReference type="FunCoup" id="Q4IEK8">
    <property type="interactions" value="1173"/>
</dbReference>
<dbReference type="STRING" id="229533.Q4IEK8"/>
<dbReference type="GeneID" id="23551605"/>
<dbReference type="KEGG" id="fgr:FGSG_04350"/>
<dbReference type="VEuPathDB" id="FungiDB:FGRAMPH1_01G15079"/>
<dbReference type="eggNOG" id="KOG0342">
    <property type="taxonomic scope" value="Eukaryota"/>
</dbReference>
<dbReference type="HOGENOM" id="CLU_003041_26_5_1"/>
<dbReference type="InParanoid" id="Q4IEK8"/>
<dbReference type="OrthoDB" id="93742at110618"/>
<dbReference type="Proteomes" id="UP000070720">
    <property type="component" value="Chromosome 2"/>
</dbReference>
<dbReference type="GO" id="GO:0005730">
    <property type="term" value="C:nucleolus"/>
    <property type="evidence" value="ECO:0007669"/>
    <property type="project" value="UniProtKB-SubCell"/>
</dbReference>
<dbReference type="GO" id="GO:0005524">
    <property type="term" value="F:ATP binding"/>
    <property type="evidence" value="ECO:0007669"/>
    <property type="project" value="UniProtKB-KW"/>
</dbReference>
<dbReference type="GO" id="GO:0016887">
    <property type="term" value="F:ATP hydrolysis activity"/>
    <property type="evidence" value="ECO:0007669"/>
    <property type="project" value="RHEA"/>
</dbReference>
<dbReference type="GO" id="GO:0003723">
    <property type="term" value="F:RNA binding"/>
    <property type="evidence" value="ECO:0007669"/>
    <property type="project" value="UniProtKB-KW"/>
</dbReference>
<dbReference type="GO" id="GO:0003724">
    <property type="term" value="F:RNA helicase activity"/>
    <property type="evidence" value="ECO:0007669"/>
    <property type="project" value="UniProtKB-EC"/>
</dbReference>
<dbReference type="GO" id="GO:0006364">
    <property type="term" value="P:rRNA processing"/>
    <property type="evidence" value="ECO:0007669"/>
    <property type="project" value="UniProtKB-KW"/>
</dbReference>
<dbReference type="CDD" id="cd17942">
    <property type="entry name" value="DEADc_DDX18"/>
    <property type="match status" value="1"/>
</dbReference>
<dbReference type="CDD" id="cd18787">
    <property type="entry name" value="SF2_C_DEAD"/>
    <property type="match status" value="1"/>
</dbReference>
<dbReference type="FunFam" id="3.40.50.300:FF:000379">
    <property type="entry name" value="RNA helicase"/>
    <property type="match status" value="1"/>
</dbReference>
<dbReference type="FunFam" id="3.40.50.300:FF:000460">
    <property type="entry name" value="RNA helicase"/>
    <property type="match status" value="1"/>
</dbReference>
<dbReference type="Gene3D" id="3.40.50.300">
    <property type="entry name" value="P-loop containing nucleotide triphosphate hydrolases"/>
    <property type="match status" value="2"/>
</dbReference>
<dbReference type="InterPro" id="IPR044773">
    <property type="entry name" value="DDX18/Has1_DEADc"/>
</dbReference>
<dbReference type="InterPro" id="IPR011545">
    <property type="entry name" value="DEAD/DEAH_box_helicase_dom"/>
</dbReference>
<dbReference type="InterPro" id="IPR014001">
    <property type="entry name" value="Helicase_ATP-bd"/>
</dbReference>
<dbReference type="InterPro" id="IPR001650">
    <property type="entry name" value="Helicase_C-like"/>
</dbReference>
<dbReference type="InterPro" id="IPR027417">
    <property type="entry name" value="P-loop_NTPase"/>
</dbReference>
<dbReference type="InterPro" id="IPR000629">
    <property type="entry name" value="RNA-helicase_DEAD-box_CS"/>
</dbReference>
<dbReference type="InterPro" id="IPR014014">
    <property type="entry name" value="RNA_helicase_DEAD_Q_motif"/>
</dbReference>
<dbReference type="InterPro" id="IPR025313">
    <property type="entry name" value="SPB4-like_CTE"/>
</dbReference>
<dbReference type="PANTHER" id="PTHR24031">
    <property type="entry name" value="RNA HELICASE"/>
    <property type="match status" value="1"/>
</dbReference>
<dbReference type="Pfam" id="PF13959">
    <property type="entry name" value="CTE_SPB4"/>
    <property type="match status" value="1"/>
</dbReference>
<dbReference type="Pfam" id="PF00270">
    <property type="entry name" value="DEAD"/>
    <property type="match status" value="1"/>
</dbReference>
<dbReference type="Pfam" id="PF00271">
    <property type="entry name" value="Helicase_C"/>
    <property type="match status" value="1"/>
</dbReference>
<dbReference type="SMART" id="SM00487">
    <property type="entry name" value="DEXDc"/>
    <property type="match status" value="1"/>
</dbReference>
<dbReference type="SMART" id="SM01178">
    <property type="entry name" value="DUF4217"/>
    <property type="match status" value="1"/>
</dbReference>
<dbReference type="SMART" id="SM00490">
    <property type="entry name" value="HELICc"/>
    <property type="match status" value="1"/>
</dbReference>
<dbReference type="SUPFAM" id="SSF52540">
    <property type="entry name" value="P-loop containing nucleoside triphosphate hydrolases"/>
    <property type="match status" value="2"/>
</dbReference>
<dbReference type="PROSITE" id="PS00039">
    <property type="entry name" value="DEAD_ATP_HELICASE"/>
    <property type="match status" value="1"/>
</dbReference>
<dbReference type="PROSITE" id="PS51192">
    <property type="entry name" value="HELICASE_ATP_BIND_1"/>
    <property type="match status" value="1"/>
</dbReference>
<dbReference type="PROSITE" id="PS51194">
    <property type="entry name" value="HELICASE_CTER"/>
    <property type="match status" value="1"/>
</dbReference>
<dbReference type="PROSITE" id="PS51195">
    <property type="entry name" value="Q_MOTIF"/>
    <property type="match status" value="1"/>
</dbReference>
<keyword id="KW-0067">ATP-binding</keyword>
<keyword id="KW-0347">Helicase</keyword>
<keyword id="KW-0378">Hydrolase</keyword>
<keyword id="KW-0547">Nucleotide-binding</keyword>
<keyword id="KW-0539">Nucleus</keyword>
<keyword id="KW-1185">Reference proteome</keyword>
<keyword id="KW-0690">Ribosome biogenesis</keyword>
<keyword id="KW-0694">RNA-binding</keyword>
<keyword id="KW-0698">rRNA processing</keyword>
<gene>
    <name type="primary">HAS1</name>
    <name type="ORF">FGRRES_04350</name>
    <name type="ORF">FGSG_04350</name>
</gene>
<comment type="function">
    <text>ATP-dependent RNA helicase involved in 40S ribosomal subunit biogenesis. Required for the processing and cleavage of 35S pre-rRNA at sites A0, A1, and A2, leading to mature 18S rRNA.</text>
</comment>
<comment type="catalytic activity">
    <reaction>
        <text>ATP + H2O = ADP + phosphate + H(+)</text>
        <dbReference type="Rhea" id="RHEA:13065"/>
        <dbReference type="ChEBI" id="CHEBI:15377"/>
        <dbReference type="ChEBI" id="CHEBI:15378"/>
        <dbReference type="ChEBI" id="CHEBI:30616"/>
        <dbReference type="ChEBI" id="CHEBI:43474"/>
        <dbReference type="ChEBI" id="CHEBI:456216"/>
        <dbReference type="EC" id="3.6.4.13"/>
    </reaction>
</comment>
<comment type="subunit">
    <text evidence="1">Associates in the nucleolus with the 60S and pre-60S ribosomal subunits.</text>
</comment>
<comment type="subcellular location">
    <subcellularLocation>
        <location evidence="1">Nucleus</location>
        <location evidence="1">Nucleolus</location>
    </subcellularLocation>
</comment>
<comment type="domain">
    <text>The Q motif is unique to and characteristic of the DEAD box family of RNA helicases and controls ATP binding and hydrolysis.</text>
</comment>
<comment type="similarity">
    <text evidence="5">Belongs to the DEAD box helicase family. DDX18/HAS1 subfamily.</text>
</comment>
<sequence length="591" mass="66307">MDFASSKKRKFKDANGVKPSKGKKSSSIPDKKSKKVKRAEPEPHDEPEDDSSDEEEQALKEVEDESDQADEDVEAANSAEEEEEEGGDEDNAENNTDLPNGGQLTLPPVAGAEAQSFEELKLSEKTMKAINEMKFTKMTEIQRRGIPPSLAGRDVLGAAKTGSGKTLAFLIPVIEMLSSLRFKPRNGTGVIVVSPTRELALQIFGVARELMAHHSQTYGIVIGGANRRAEAEKLAKGVNLLIATPGRLLDHLQNTPFVFKNLKSLVIDEADRILEIGFEDEMRQIIKVLPKEDRQTMLFSATQTTKVEDLARISLRPGPLYINVDEEKQYSTVEGLEQGYIICETDMRFLLLFSFLKRNLKKKIIVFFSSCACVKYHAELLNYIDLPVLDLHGKQKQQKRTNTFFEFCNAKQGTLICTDVAARGLDIPSVDWIIQFDPPDDPRDYIHRVGRTARGSNNKGRSLMFLQPNELGFLSHLKAARVPVAEFNFPTKKIINVQSQLEKLISQNYYLNKSAKDGYRSYMHAYASHSLRSVFDINKLDLAKVAKSFGFTQPPRVDITLGASMSRDKKQQGRRAYGSQPRQNQGNKFTR</sequence>
<reference key="1">
    <citation type="journal article" date="2007" name="Science">
        <title>The Fusarium graminearum genome reveals a link between localized polymorphism and pathogen specialization.</title>
        <authorList>
            <person name="Cuomo C.A."/>
            <person name="Gueldener U."/>
            <person name="Xu J.-R."/>
            <person name="Trail F."/>
            <person name="Turgeon B.G."/>
            <person name="Di Pietro A."/>
            <person name="Walton J.D."/>
            <person name="Ma L.-J."/>
            <person name="Baker S.E."/>
            <person name="Rep M."/>
            <person name="Adam G."/>
            <person name="Antoniw J."/>
            <person name="Baldwin T."/>
            <person name="Calvo S.E."/>
            <person name="Chang Y.-L."/>
            <person name="DeCaprio D."/>
            <person name="Gale L.R."/>
            <person name="Gnerre S."/>
            <person name="Goswami R.S."/>
            <person name="Hammond-Kosack K."/>
            <person name="Harris L.J."/>
            <person name="Hilburn K."/>
            <person name="Kennell J.C."/>
            <person name="Kroken S."/>
            <person name="Magnuson J.K."/>
            <person name="Mannhaupt G."/>
            <person name="Mauceli E.W."/>
            <person name="Mewes H.-W."/>
            <person name="Mitterbauer R."/>
            <person name="Muehlbauer G."/>
            <person name="Muensterkoetter M."/>
            <person name="Nelson D."/>
            <person name="O'Donnell K."/>
            <person name="Ouellet T."/>
            <person name="Qi W."/>
            <person name="Quesneville H."/>
            <person name="Roncero M.I.G."/>
            <person name="Seong K.-Y."/>
            <person name="Tetko I.V."/>
            <person name="Urban M."/>
            <person name="Waalwijk C."/>
            <person name="Ward T.J."/>
            <person name="Yao J."/>
            <person name="Birren B.W."/>
            <person name="Kistler H.C."/>
        </authorList>
    </citation>
    <scope>NUCLEOTIDE SEQUENCE [LARGE SCALE GENOMIC DNA]</scope>
    <source>
        <strain>ATCC MYA-4620 / CBS 123657 / FGSC 9075 / NRRL 31084 / PH-1</strain>
    </source>
</reference>
<reference key="2">
    <citation type="journal article" date="2010" name="Nature">
        <title>Comparative genomics reveals mobile pathogenicity chromosomes in Fusarium.</title>
        <authorList>
            <person name="Ma L.-J."/>
            <person name="van der Does H.C."/>
            <person name="Borkovich K.A."/>
            <person name="Coleman J.J."/>
            <person name="Daboussi M.-J."/>
            <person name="Di Pietro A."/>
            <person name="Dufresne M."/>
            <person name="Freitag M."/>
            <person name="Grabherr M."/>
            <person name="Henrissat B."/>
            <person name="Houterman P.M."/>
            <person name="Kang S."/>
            <person name="Shim W.-B."/>
            <person name="Woloshuk C."/>
            <person name="Xie X."/>
            <person name="Xu J.-R."/>
            <person name="Antoniw J."/>
            <person name="Baker S.E."/>
            <person name="Bluhm B.H."/>
            <person name="Breakspear A."/>
            <person name="Brown D.W."/>
            <person name="Butchko R.A.E."/>
            <person name="Chapman S."/>
            <person name="Coulson R."/>
            <person name="Coutinho P.M."/>
            <person name="Danchin E.G.J."/>
            <person name="Diener A."/>
            <person name="Gale L.R."/>
            <person name="Gardiner D.M."/>
            <person name="Goff S."/>
            <person name="Hammond-Kosack K.E."/>
            <person name="Hilburn K."/>
            <person name="Hua-Van A."/>
            <person name="Jonkers W."/>
            <person name="Kazan K."/>
            <person name="Kodira C.D."/>
            <person name="Koehrsen M."/>
            <person name="Kumar L."/>
            <person name="Lee Y.-H."/>
            <person name="Li L."/>
            <person name="Manners J.M."/>
            <person name="Miranda-Saavedra D."/>
            <person name="Mukherjee M."/>
            <person name="Park G."/>
            <person name="Park J."/>
            <person name="Park S.-Y."/>
            <person name="Proctor R.H."/>
            <person name="Regev A."/>
            <person name="Ruiz-Roldan M.C."/>
            <person name="Sain D."/>
            <person name="Sakthikumar S."/>
            <person name="Sykes S."/>
            <person name="Schwartz D.C."/>
            <person name="Turgeon B.G."/>
            <person name="Wapinski I."/>
            <person name="Yoder O."/>
            <person name="Young S."/>
            <person name="Zeng Q."/>
            <person name="Zhou S."/>
            <person name="Galagan J."/>
            <person name="Cuomo C.A."/>
            <person name="Kistler H.C."/>
            <person name="Rep M."/>
        </authorList>
    </citation>
    <scope>GENOME REANNOTATION</scope>
    <source>
        <strain>ATCC MYA-4620 / CBS 123657 / FGSC 9075 / NRRL 31084 / PH-1</strain>
    </source>
</reference>
<reference key="3">
    <citation type="journal article" date="2015" name="BMC Genomics">
        <title>The completed genome sequence of the pathogenic ascomycete fungus Fusarium graminearum.</title>
        <authorList>
            <person name="King R."/>
            <person name="Urban M."/>
            <person name="Hammond-Kosack M.C.U."/>
            <person name="Hassani-Pak K."/>
            <person name="Hammond-Kosack K.E."/>
        </authorList>
    </citation>
    <scope>NUCLEOTIDE SEQUENCE [LARGE SCALE GENOMIC DNA]</scope>
    <source>
        <strain>ATCC MYA-4620 / CBS 123657 / FGSC 9075 / NRRL 31084 / PH-1</strain>
    </source>
</reference>
<feature type="chain" id="PRO_0000232212" description="ATP-dependent RNA helicase HAS1">
    <location>
        <begin position="1"/>
        <end position="591"/>
    </location>
</feature>
<feature type="domain" description="Helicase ATP-binding" evidence="2">
    <location>
        <begin position="146"/>
        <end position="321"/>
    </location>
</feature>
<feature type="domain" description="Helicase C-terminal" evidence="3">
    <location>
        <begin position="335"/>
        <end position="495"/>
    </location>
</feature>
<feature type="region of interest" description="Disordered" evidence="4">
    <location>
        <begin position="1"/>
        <end position="108"/>
    </location>
</feature>
<feature type="region of interest" description="Disordered" evidence="4">
    <location>
        <begin position="560"/>
        <end position="591"/>
    </location>
</feature>
<feature type="short sequence motif" description="Q motif">
    <location>
        <begin position="115"/>
        <end position="143"/>
    </location>
</feature>
<feature type="short sequence motif" description="DEAD box">
    <location>
        <begin position="268"/>
        <end position="271"/>
    </location>
</feature>
<feature type="short sequence motif" description="Bipartite nuclear localization signal" evidence="1">
    <location>
        <begin position="347"/>
        <end position="363"/>
    </location>
</feature>
<feature type="compositionally biased region" description="Basic residues" evidence="4">
    <location>
        <begin position="1"/>
        <end position="11"/>
    </location>
</feature>
<feature type="compositionally biased region" description="Acidic residues" evidence="4">
    <location>
        <begin position="45"/>
        <end position="92"/>
    </location>
</feature>
<feature type="compositionally biased region" description="Polar residues" evidence="4">
    <location>
        <begin position="580"/>
        <end position="591"/>
    </location>
</feature>
<feature type="binding site" evidence="2">
    <location>
        <begin position="159"/>
        <end position="166"/>
    </location>
    <ligand>
        <name>ATP</name>
        <dbReference type="ChEBI" id="CHEBI:30616"/>
    </ligand>
</feature>
<name>HAS1_GIBZE</name>